<protein>
    <recommendedName>
        <fullName evidence="2">Triosephosphate isomerase</fullName>
        <shortName evidence="2">TIM</shortName>
        <shortName evidence="2">TPI</shortName>
        <ecNumber evidence="2">5.3.1.1</ecNumber>
    </recommendedName>
    <alternativeName>
        <fullName evidence="2">Triose-phosphate isomerase</fullName>
    </alternativeName>
</protein>
<proteinExistence type="inferred from homology"/>
<gene>
    <name evidence="2" type="primary">tpiA</name>
    <name type="synonym">tpi</name>
    <name type="ordered locus">SPy_0613</name>
    <name type="ordered locus">M5005_Spy0509</name>
</gene>
<name>TPIS_STRP1</name>
<organism>
    <name type="scientific">Streptococcus pyogenes serotype M1</name>
    <dbReference type="NCBI Taxonomy" id="301447"/>
    <lineage>
        <taxon>Bacteria</taxon>
        <taxon>Bacillati</taxon>
        <taxon>Bacillota</taxon>
        <taxon>Bacilli</taxon>
        <taxon>Lactobacillales</taxon>
        <taxon>Streptococcaceae</taxon>
        <taxon>Streptococcus</taxon>
    </lineage>
</organism>
<dbReference type="EC" id="5.3.1.1" evidence="2"/>
<dbReference type="EMBL" id="AE004092">
    <property type="protein sequence ID" value="AAK33587.1"/>
    <property type="molecule type" value="Genomic_DNA"/>
</dbReference>
<dbReference type="EMBL" id="CP000017">
    <property type="protein sequence ID" value="AAZ51127.1"/>
    <property type="molecule type" value="Genomic_DNA"/>
</dbReference>
<dbReference type="RefSeq" id="NP_268866.1">
    <property type="nucleotide sequence ID" value="NC_002737.2"/>
</dbReference>
<dbReference type="SMR" id="P69887"/>
<dbReference type="PaxDb" id="1314-HKU360_00520"/>
<dbReference type="KEGG" id="spy:SPy_0613"/>
<dbReference type="KEGG" id="spz:M5005_Spy0509"/>
<dbReference type="PATRIC" id="fig|160490.10.peg.524"/>
<dbReference type="HOGENOM" id="CLU_024251_2_3_9"/>
<dbReference type="OMA" id="NWKMHMT"/>
<dbReference type="UniPathway" id="UPA00109">
    <property type="reaction ID" value="UER00189"/>
</dbReference>
<dbReference type="UniPathway" id="UPA00138"/>
<dbReference type="Proteomes" id="UP000000750">
    <property type="component" value="Chromosome"/>
</dbReference>
<dbReference type="GO" id="GO:0005829">
    <property type="term" value="C:cytosol"/>
    <property type="evidence" value="ECO:0007669"/>
    <property type="project" value="TreeGrafter"/>
</dbReference>
<dbReference type="GO" id="GO:0004807">
    <property type="term" value="F:triose-phosphate isomerase activity"/>
    <property type="evidence" value="ECO:0007669"/>
    <property type="project" value="UniProtKB-UniRule"/>
</dbReference>
<dbReference type="GO" id="GO:0006094">
    <property type="term" value="P:gluconeogenesis"/>
    <property type="evidence" value="ECO:0007669"/>
    <property type="project" value="UniProtKB-UniRule"/>
</dbReference>
<dbReference type="GO" id="GO:0046166">
    <property type="term" value="P:glyceraldehyde-3-phosphate biosynthetic process"/>
    <property type="evidence" value="ECO:0007669"/>
    <property type="project" value="TreeGrafter"/>
</dbReference>
<dbReference type="GO" id="GO:0019563">
    <property type="term" value="P:glycerol catabolic process"/>
    <property type="evidence" value="ECO:0007669"/>
    <property type="project" value="TreeGrafter"/>
</dbReference>
<dbReference type="GO" id="GO:0006096">
    <property type="term" value="P:glycolytic process"/>
    <property type="evidence" value="ECO:0007669"/>
    <property type="project" value="UniProtKB-UniRule"/>
</dbReference>
<dbReference type="CDD" id="cd00311">
    <property type="entry name" value="TIM"/>
    <property type="match status" value="1"/>
</dbReference>
<dbReference type="FunFam" id="3.20.20.70:FF:000016">
    <property type="entry name" value="Triosephosphate isomerase"/>
    <property type="match status" value="1"/>
</dbReference>
<dbReference type="Gene3D" id="3.20.20.70">
    <property type="entry name" value="Aldolase class I"/>
    <property type="match status" value="1"/>
</dbReference>
<dbReference type="HAMAP" id="MF_00147_B">
    <property type="entry name" value="TIM_B"/>
    <property type="match status" value="1"/>
</dbReference>
<dbReference type="InterPro" id="IPR013785">
    <property type="entry name" value="Aldolase_TIM"/>
</dbReference>
<dbReference type="InterPro" id="IPR035990">
    <property type="entry name" value="TIM_sf"/>
</dbReference>
<dbReference type="InterPro" id="IPR022896">
    <property type="entry name" value="TrioseP_Isoase_bac/euk"/>
</dbReference>
<dbReference type="InterPro" id="IPR000652">
    <property type="entry name" value="Triosephosphate_isomerase"/>
</dbReference>
<dbReference type="InterPro" id="IPR020861">
    <property type="entry name" value="Triosephosphate_isomerase_AS"/>
</dbReference>
<dbReference type="NCBIfam" id="TIGR00419">
    <property type="entry name" value="tim"/>
    <property type="match status" value="1"/>
</dbReference>
<dbReference type="PANTHER" id="PTHR21139">
    <property type="entry name" value="TRIOSEPHOSPHATE ISOMERASE"/>
    <property type="match status" value="1"/>
</dbReference>
<dbReference type="PANTHER" id="PTHR21139:SF42">
    <property type="entry name" value="TRIOSEPHOSPHATE ISOMERASE"/>
    <property type="match status" value="1"/>
</dbReference>
<dbReference type="Pfam" id="PF00121">
    <property type="entry name" value="TIM"/>
    <property type="match status" value="1"/>
</dbReference>
<dbReference type="SUPFAM" id="SSF51351">
    <property type="entry name" value="Triosephosphate isomerase (TIM)"/>
    <property type="match status" value="1"/>
</dbReference>
<dbReference type="PROSITE" id="PS00171">
    <property type="entry name" value="TIM_1"/>
    <property type="match status" value="1"/>
</dbReference>
<dbReference type="PROSITE" id="PS51440">
    <property type="entry name" value="TIM_2"/>
    <property type="match status" value="1"/>
</dbReference>
<accession>P69887</accession>
<accession>P82478</accession>
<accession>Q48ZU1</accession>
<evidence type="ECO:0000250" key="1"/>
<evidence type="ECO:0000255" key="2">
    <source>
        <dbReference type="HAMAP-Rule" id="MF_00147"/>
    </source>
</evidence>
<feature type="initiator methionine" description="Removed" evidence="1">
    <location>
        <position position="1"/>
    </location>
</feature>
<feature type="chain" id="PRO_0000090299" description="Triosephosphate isomerase">
    <location>
        <begin position="2"/>
        <end position="252"/>
    </location>
</feature>
<feature type="active site" description="Electrophile" evidence="2">
    <location>
        <position position="96"/>
    </location>
</feature>
<feature type="active site" description="Proton acceptor" evidence="2">
    <location>
        <position position="168"/>
    </location>
</feature>
<feature type="binding site" evidence="2">
    <location>
        <begin position="10"/>
        <end position="12"/>
    </location>
    <ligand>
        <name>substrate</name>
    </ligand>
</feature>
<feature type="binding site" evidence="2">
    <location>
        <position position="174"/>
    </location>
    <ligand>
        <name>substrate</name>
    </ligand>
</feature>
<feature type="binding site" evidence="2">
    <location>
        <position position="214"/>
    </location>
    <ligand>
        <name>substrate</name>
    </ligand>
</feature>
<feature type="binding site" evidence="2">
    <location>
        <begin position="235"/>
        <end position="236"/>
    </location>
    <ligand>
        <name>substrate</name>
    </ligand>
</feature>
<reference key="1">
    <citation type="journal article" date="2001" name="Proc. Natl. Acad. Sci. U.S.A.">
        <title>Complete genome sequence of an M1 strain of Streptococcus pyogenes.</title>
        <authorList>
            <person name="Ferretti J.J."/>
            <person name="McShan W.M."/>
            <person name="Ajdic D.J."/>
            <person name="Savic D.J."/>
            <person name="Savic G."/>
            <person name="Lyon K."/>
            <person name="Primeaux C."/>
            <person name="Sezate S."/>
            <person name="Suvorov A.N."/>
            <person name="Kenton S."/>
            <person name="Lai H.S."/>
            <person name="Lin S.P."/>
            <person name="Qian Y."/>
            <person name="Jia H.G."/>
            <person name="Najar F.Z."/>
            <person name="Ren Q."/>
            <person name="Zhu H."/>
            <person name="Song L."/>
            <person name="White J."/>
            <person name="Yuan X."/>
            <person name="Clifton S.W."/>
            <person name="Roe B.A."/>
            <person name="McLaughlin R.E."/>
        </authorList>
    </citation>
    <scope>NUCLEOTIDE SEQUENCE [LARGE SCALE GENOMIC DNA]</scope>
    <source>
        <strain>ATCC 700294 / SF370 / Serotype M1</strain>
    </source>
</reference>
<reference key="2">
    <citation type="journal article" date="2005" name="J. Infect. Dis.">
        <title>Evolutionary origin and emergence of a highly successful clone of serotype M1 group A Streptococcus involved multiple horizontal gene transfer events.</title>
        <authorList>
            <person name="Sumby P."/>
            <person name="Porcella S.F."/>
            <person name="Madrigal A.G."/>
            <person name="Barbian K.D."/>
            <person name="Virtaneva K."/>
            <person name="Ricklefs S.M."/>
            <person name="Sturdevant D.E."/>
            <person name="Graham M.R."/>
            <person name="Vuopio-Varkila J."/>
            <person name="Hoe N.P."/>
            <person name="Musser J.M."/>
        </authorList>
    </citation>
    <scope>NUCLEOTIDE SEQUENCE [LARGE SCALE GENOMIC DNA]</scope>
    <source>
        <strain>ATCC BAA-947 / MGAS5005 / Serotype M1</strain>
    </source>
</reference>
<comment type="function">
    <text evidence="2">Involved in the gluconeogenesis. Catalyzes stereospecifically the conversion of dihydroxyacetone phosphate (DHAP) to D-glyceraldehyde-3-phosphate (G3P).</text>
</comment>
<comment type="catalytic activity">
    <reaction evidence="2">
        <text>D-glyceraldehyde 3-phosphate = dihydroxyacetone phosphate</text>
        <dbReference type="Rhea" id="RHEA:18585"/>
        <dbReference type="ChEBI" id="CHEBI:57642"/>
        <dbReference type="ChEBI" id="CHEBI:59776"/>
        <dbReference type="EC" id="5.3.1.1"/>
    </reaction>
</comment>
<comment type="pathway">
    <text evidence="2">Carbohydrate biosynthesis; gluconeogenesis.</text>
</comment>
<comment type="pathway">
    <text evidence="2">Carbohydrate degradation; glycolysis; D-glyceraldehyde 3-phosphate from glycerone phosphate: step 1/1.</text>
</comment>
<comment type="subunit">
    <text evidence="2">Homodimer.</text>
</comment>
<comment type="subcellular location">
    <subcellularLocation>
        <location evidence="2">Cytoplasm</location>
    </subcellularLocation>
</comment>
<comment type="similarity">
    <text evidence="2">Belongs to the triosephosphate isomerase family.</text>
</comment>
<keyword id="KW-0963">Cytoplasm</keyword>
<keyword id="KW-0312">Gluconeogenesis</keyword>
<keyword id="KW-0324">Glycolysis</keyword>
<keyword id="KW-0413">Isomerase</keyword>
<keyword id="KW-1185">Reference proteome</keyword>
<sequence>MSRKPIIAGNWKMNKNPQEAKAFVEAVASKLPSTDLVDVAVAAPAVDLVTTIEAAKDSVLKVAAQNCYFENTGAFTGETSPKVLAEMGADYVVIGHSERRDYFHETDEDINKKAKAIFANGLTPIVCCGESLETYEAGKAVEFVGAQVSAALAGLSAEQVASLVLAYEPIWAIGTGKSATQDDAQNMCKAVRDVVAADFGQEVADKVRVQYGGSVKPENVKDYMACPDVDGALVGGASLEADSFLALLDFLN</sequence>